<reference key="1">
    <citation type="submission" date="2008-04" db="EMBL/GenBank/DDBJ databases">
        <title>Complete sequence of Yersinia pseudotuberculosis PB1/+.</title>
        <authorList>
            <person name="Copeland A."/>
            <person name="Lucas S."/>
            <person name="Lapidus A."/>
            <person name="Glavina del Rio T."/>
            <person name="Dalin E."/>
            <person name="Tice H."/>
            <person name="Bruce D."/>
            <person name="Goodwin L."/>
            <person name="Pitluck S."/>
            <person name="Munk A.C."/>
            <person name="Brettin T."/>
            <person name="Detter J.C."/>
            <person name="Han C."/>
            <person name="Tapia R."/>
            <person name="Schmutz J."/>
            <person name="Larimer F."/>
            <person name="Land M."/>
            <person name="Hauser L."/>
            <person name="Challacombe J.F."/>
            <person name="Green L."/>
            <person name="Lindler L.E."/>
            <person name="Nikolich M.P."/>
            <person name="Richardson P."/>
        </authorList>
    </citation>
    <scope>NUCLEOTIDE SEQUENCE [LARGE SCALE GENOMIC DNA]</scope>
    <source>
        <strain>PB1/+</strain>
    </source>
</reference>
<evidence type="ECO:0000255" key="1">
    <source>
        <dbReference type="HAMAP-Rule" id="MF_01003"/>
    </source>
</evidence>
<keyword id="KW-0997">Cell inner membrane</keyword>
<keyword id="KW-1003">Cell membrane</keyword>
<keyword id="KW-0472">Membrane</keyword>
<keyword id="KW-0812">Transmembrane</keyword>
<keyword id="KW-1133">Transmembrane helix</keyword>
<accession>B2K059</accession>
<feature type="chain" id="PRO_1000200222" description="Probable ECA polymerase">
    <location>
        <begin position="1"/>
        <end position="454"/>
    </location>
</feature>
<feature type="transmembrane region" description="Helical" evidence="1">
    <location>
        <begin position="3"/>
        <end position="23"/>
    </location>
</feature>
<feature type="transmembrane region" description="Helical" evidence="1">
    <location>
        <begin position="39"/>
        <end position="59"/>
    </location>
</feature>
<feature type="transmembrane region" description="Helical" evidence="1">
    <location>
        <begin position="61"/>
        <end position="81"/>
    </location>
</feature>
<feature type="transmembrane region" description="Helical" evidence="1">
    <location>
        <begin position="119"/>
        <end position="139"/>
    </location>
</feature>
<feature type="transmembrane region" description="Helical" evidence="1">
    <location>
        <begin position="154"/>
        <end position="174"/>
    </location>
</feature>
<feature type="transmembrane region" description="Helical" evidence="1">
    <location>
        <begin position="180"/>
        <end position="200"/>
    </location>
</feature>
<feature type="transmembrane region" description="Helical" evidence="1">
    <location>
        <begin position="201"/>
        <end position="221"/>
    </location>
</feature>
<feature type="transmembrane region" description="Helical" evidence="1">
    <location>
        <begin position="222"/>
        <end position="242"/>
    </location>
</feature>
<feature type="transmembrane region" description="Helical" evidence="1">
    <location>
        <begin position="340"/>
        <end position="360"/>
    </location>
</feature>
<feature type="transmembrane region" description="Helical" evidence="1">
    <location>
        <begin position="377"/>
        <end position="397"/>
    </location>
</feature>
<feature type="transmembrane region" description="Helical" evidence="1">
    <location>
        <begin position="409"/>
        <end position="429"/>
    </location>
</feature>
<dbReference type="EMBL" id="CP001048">
    <property type="protein sequence ID" value="ACC87187.1"/>
    <property type="molecule type" value="Genomic_DNA"/>
</dbReference>
<dbReference type="RefSeq" id="WP_002211978.1">
    <property type="nucleotide sequence ID" value="NZ_CP009780.1"/>
</dbReference>
<dbReference type="GeneID" id="57974847"/>
<dbReference type="KEGG" id="ypb:YPTS_0190"/>
<dbReference type="PATRIC" id="fig|502801.10.peg.3867"/>
<dbReference type="UniPathway" id="UPA00566"/>
<dbReference type="GO" id="GO:0005886">
    <property type="term" value="C:plasma membrane"/>
    <property type="evidence" value="ECO:0007669"/>
    <property type="project" value="UniProtKB-SubCell"/>
</dbReference>
<dbReference type="GO" id="GO:0009246">
    <property type="term" value="P:enterobacterial common antigen biosynthetic process"/>
    <property type="evidence" value="ECO:0007669"/>
    <property type="project" value="UniProtKB-UniRule"/>
</dbReference>
<dbReference type="HAMAP" id="MF_01003">
    <property type="entry name" value="WzyE"/>
    <property type="match status" value="1"/>
</dbReference>
<dbReference type="InterPro" id="IPR010691">
    <property type="entry name" value="WzyE"/>
</dbReference>
<dbReference type="NCBIfam" id="NF002820">
    <property type="entry name" value="PRK02975.1"/>
    <property type="match status" value="1"/>
</dbReference>
<dbReference type="Pfam" id="PF06899">
    <property type="entry name" value="WzyE"/>
    <property type="match status" value="1"/>
</dbReference>
<comment type="function">
    <text evidence="1">Probably involved in the polymerization of enterobacterial common antigen (ECA) trisaccharide repeat units.</text>
</comment>
<comment type="pathway">
    <text evidence="1">Bacterial outer membrane biogenesis; enterobacterial common antigen biosynthesis.</text>
</comment>
<comment type="subunit">
    <text evidence="1">Probably part of a complex composed of WzxE, WzyE and WzzE.</text>
</comment>
<comment type="subcellular location">
    <subcellularLocation>
        <location evidence="1">Cell inner membrane</location>
        <topology evidence="1">Multi-pass membrane protein</topology>
    </subcellularLocation>
</comment>
<comment type="similarity">
    <text evidence="1">Belongs to the WzyE family.</text>
</comment>
<name>WZYE_YERPB</name>
<proteinExistence type="inferred from homology"/>
<organism>
    <name type="scientific">Yersinia pseudotuberculosis serotype IB (strain PB1/+)</name>
    <dbReference type="NCBI Taxonomy" id="502801"/>
    <lineage>
        <taxon>Bacteria</taxon>
        <taxon>Pseudomonadati</taxon>
        <taxon>Pseudomonadota</taxon>
        <taxon>Gammaproteobacteria</taxon>
        <taxon>Enterobacterales</taxon>
        <taxon>Yersiniaceae</taxon>
        <taxon>Yersinia</taxon>
    </lineage>
</organism>
<protein>
    <recommendedName>
        <fullName evidence="1">Probable ECA polymerase</fullName>
    </recommendedName>
</protein>
<gene>
    <name evidence="1" type="primary">wzyE</name>
    <name type="ordered locus">YPTS_0190</name>
</gene>
<sequence>MTLGQFGGLFCIYLIAVIFILTLTYQEFRRVKFNFNVLFSMLYLLTFYFGFPLTCMLVFQFGVAVVPVEYLLYAMLSATAFYGIYYVTYKTRLRQPRSQPRTPIFTMNRVETNLTWVLLALVAVGTVGIFFMQNGFLLFKLDSYSKIFSSDVSGVALKRFFYFFIPAMLVVYFLKQDRRAWFFFLASTVAFGILTYVIVGGTRANIIIAFSLFLFIGIVRGWITLWMLAAAGVFGIVGMFWLALKRYGLDVNGAEAFYTFLYLTRDTFSPWENLGLLLQNYDKIDFQGLAPIVRDFYVFIPSALWPERPDLVLNTANYFTWDVLDNHSGLAISPTLIGSLVVMGGVLFIPLGAIVVGLIIKWFDWLYEQGKAESNRYKAAILQSFCFGAVFNIIVLAREGLDSFVSRVVFFCVIFGACLVLAKLLYWLFDTAGLIKRQGIKSNRLSTPNAGNQL</sequence>